<organism>
    <name type="scientific">Bos taurus</name>
    <name type="common">Bovine</name>
    <dbReference type="NCBI Taxonomy" id="9913"/>
    <lineage>
        <taxon>Eukaryota</taxon>
        <taxon>Metazoa</taxon>
        <taxon>Chordata</taxon>
        <taxon>Craniata</taxon>
        <taxon>Vertebrata</taxon>
        <taxon>Euteleostomi</taxon>
        <taxon>Mammalia</taxon>
        <taxon>Eutheria</taxon>
        <taxon>Laurasiatheria</taxon>
        <taxon>Artiodactyla</taxon>
        <taxon>Ruminantia</taxon>
        <taxon>Pecora</taxon>
        <taxon>Bovidae</taxon>
        <taxon>Bovinae</taxon>
        <taxon>Bos</taxon>
    </lineage>
</organism>
<protein>
    <recommendedName>
        <fullName>Gap junction gamma-3 protein</fullName>
    </recommendedName>
    <alternativeName>
        <fullName>Gap junction epsilon-1 protein</fullName>
    </alternativeName>
</protein>
<name>CXG3_BOVIN</name>
<evidence type="ECO:0000250" key="1"/>
<evidence type="ECO:0000255" key="2"/>
<evidence type="ECO:0000256" key="3">
    <source>
        <dbReference type="SAM" id="MobiDB-lite"/>
    </source>
</evidence>
<evidence type="ECO:0000305" key="4"/>
<dbReference type="EMBL" id="BC133515">
    <property type="protein sequence ID" value="AAI33516.1"/>
    <property type="molecule type" value="mRNA"/>
</dbReference>
<dbReference type="RefSeq" id="NP_001076962.1">
    <property type="nucleotide sequence ID" value="NM_001083493.1"/>
</dbReference>
<dbReference type="SMR" id="A3KN25"/>
<dbReference type="FunCoup" id="A3KN25">
    <property type="interactions" value="20"/>
</dbReference>
<dbReference type="STRING" id="9913.ENSBTAP00000051873"/>
<dbReference type="PaxDb" id="9913-ENSBTAP00000051873"/>
<dbReference type="Ensembl" id="ENSBTAT00000054755.3">
    <property type="protein sequence ID" value="ENSBTAP00000051873.3"/>
    <property type="gene ID" value="ENSBTAG00000038074.3"/>
</dbReference>
<dbReference type="GeneID" id="539991"/>
<dbReference type="KEGG" id="bta:539991"/>
<dbReference type="CTD" id="349149"/>
<dbReference type="VGNC" id="VGNC:29384">
    <property type="gene designation" value="GJC3"/>
</dbReference>
<dbReference type="eggNOG" id="ENOG502QVY2">
    <property type="taxonomic scope" value="Eukaryota"/>
</dbReference>
<dbReference type="GeneTree" id="ENSGT01130000278352"/>
<dbReference type="HOGENOM" id="CLU_037388_4_0_1"/>
<dbReference type="InParanoid" id="A3KN25"/>
<dbReference type="OrthoDB" id="9833722at2759"/>
<dbReference type="TreeFam" id="TF329606"/>
<dbReference type="Proteomes" id="UP000009136">
    <property type="component" value="Chromosome 25"/>
</dbReference>
<dbReference type="GO" id="GO:0005922">
    <property type="term" value="C:connexin complex"/>
    <property type="evidence" value="ECO:0000318"/>
    <property type="project" value="GO_Central"/>
</dbReference>
<dbReference type="GO" id="GO:0005243">
    <property type="term" value="F:gap junction channel activity"/>
    <property type="evidence" value="ECO:0000318"/>
    <property type="project" value="GO_Central"/>
</dbReference>
<dbReference type="GO" id="GO:0007267">
    <property type="term" value="P:cell-cell signaling"/>
    <property type="evidence" value="ECO:0000318"/>
    <property type="project" value="GO_Central"/>
</dbReference>
<dbReference type="Gene3D" id="1.20.1440.80">
    <property type="entry name" value="Gap junction channel protein cysteine-rich domain"/>
    <property type="match status" value="1"/>
</dbReference>
<dbReference type="InterPro" id="IPR000500">
    <property type="entry name" value="Connexin"/>
</dbReference>
<dbReference type="InterPro" id="IPR019570">
    <property type="entry name" value="Connexin_CCC"/>
</dbReference>
<dbReference type="InterPro" id="IPR017990">
    <property type="entry name" value="Connexin_CS"/>
</dbReference>
<dbReference type="InterPro" id="IPR013092">
    <property type="entry name" value="Connexin_N"/>
</dbReference>
<dbReference type="InterPro" id="IPR038359">
    <property type="entry name" value="Connexin_N_sf"/>
</dbReference>
<dbReference type="PANTHER" id="PTHR11984">
    <property type="entry name" value="CONNEXIN"/>
    <property type="match status" value="1"/>
</dbReference>
<dbReference type="PANTHER" id="PTHR11984:SF56">
    <property type="entry name" value="GAP JUNCTION GAMMA-3 PROTEIN"/>
    <property type="match status" value="1"/>
</dbReference>
<dbReference type="Pfam" id="PF00029">
    <property type="entry name" value="Connexin"/>
    <property type="match status" value="1"/>
</dbReference>
<dbReference type="PRINTS" id="PR00206">
    <property type="entry name" value="CONNEXIN"/>
</dbReference>
<dbReference type="SMART" id="SM00037">
    <property type="entry name" value="CNX"/>
    <property type="match status" value="1"/>
</dbReference>
<dbReference type="SMART" id="SM01089">
    <property type="entry name" value="Connexin_CCC"/>
    <property type="match status" value="1"/>
</dbReference>
<dbReference type="PROSITE" id="PS00408">
    <property type="entry name" value="CONNEXINS_2"/>
    <property type="match status" value="1"/>
</dbReference>
<reference key="1">
    <citation type="submission" date="2007-02" db="EMBL/GenBank/DDBJ databases">
        <authorList>
            <consortium name="NIH - Mammalian Gene Collection (MGC) project"/>
        </authorList>
    </citation>
    <scope>NUCLEOTIDE SEQUENCE [LARGE SCALE MRNA]</scope>
    <source>
        <strain>Hereford</strain>
        <tissue>Fetal skin</tissue>
    </source>
</reference>
<sequence>MCGSFLRRVAAEESRHPTPVGRLLLPALLGLRLVLLAAGGTGVFGGGEEQSEFVCHTQQAGCKAVCYDAFHPLSPLRFWAFQVTLVAVPSALYMGFILYHVIWHWEASEKVKTEEETLSQGEKGGEASRAGSSRLLWAYVAQLGVRLALEGAALGGQYHLYGFRMPSSFVCRLEPCLGSTNCYLSRPSEKSIFLKTMFGVTGLCLLFTLLELVLLGLGRWWRIWRHKSPSSNYSPTSQSAKRCKAPTDNFPVVEIRERPGEAGERGSEVPLSARP</sequence>
<accession>A3KN25</accession>
<keyword id="KW-0965">Cell junction</keyword>
<keyword id="KW-1003">Cell membrane</keyword>
<keyword id="KW-0303">Gap junction</keyword>
<keyword id="KW-0472">Membrane</keyword>
<keyword id="KW-1185">Reference proteome</keyword>
<keyword id="KW-0812">Transmembrane</keyword>
<keyword id="KW-1133">Transmembrane helix</keyword>
<proteinExistence type="evidence at transcript level"/>
<comment type="function">
    <text evidence="1">One gap junction consists of a cluster of closely packed pairs of transmembrane channels, the connexons, through which materials of low MW diffuse from one cell to a neighboring cell.</text>
</comment>
<comment type="subunit">
    <text evidence="1">A connexon is composed of a hexamer of connexins.</text>
</comment>
<comment type="subcellular location">
    <subcellularLocation>
        <location evidence="1">Cell membrane</location>
        <topology evidence="1">Multi-pass membrane protein</topology>
    </subcellularLocation>
    <subcellularLocation>
        <location evidence="1">Cell junction</location>
        <location evidence="1">Gap junction</location>
    </subcellularLocation>
</comment>
<comment type="similarity">
    <text evidence="4">Belongs to the connexin family. Gamma-type subfamily.</text>
</comment>
<gene>
    <name type="primary">GJC3</name>
    <name type="synonym">GJE1</name>
</gene>
<feature type="chain" id="PRO_0000313007" description="Gap junction gamma-3 protein">
    <location>
        <begin position="1"/>
        <end position="275"/>
    </location>
</feature>
<feature type="topological domain" description="Cytoplasmic" evidence="2">
    <location>
        <begin position="1"/>
        <end position="22"/>
    </location>
</feature>
<feature type="transmembrane region" description="Helical" evidence="2">
    <location>
        <begin position="23"/>
        <end position="43"/>
    </location>
</feature>
<feature type="topological domain" description="Extracellular" evidence="2">
    <location>
        <begin position="44"/>
        <end position="77"/>
    </location>
</feature>
<feature type="transmembrane region" description="Helical" evidence="2">
    <location>
        <begin position="78"/>
        <end position="98"/>
    </location>
</feature>
<feature type="topological domain" description="Cytoplasmic" evidence="2">
    <location>
        <begin position="99"/>
        <end position="134"/>
    </location>
</feature>
<feature type="transmembrane region" description="Helical" evidence="2">
    <location>
        <begin position="135"/>
        <end position="155"/>
    </location>
</feature>
<feature type="topological domain" description="Extracellular" evidence="2">
    <location>
        <begin position="156"/>
        <end position="196"/>
    </location>
</feature>
<feature type="transmembrane region" description="Helical" evidence="2">
    <location>
        <begin position="197"/>
        <end position="217"/>
    </location>
</feature>
<feature type="topological domain" description="Cytoplasmic" evidence="2">
    <location>
        <begin position="218"/>
        <end position="275"/>
    </location>
</feature>
<feature type="region of interest" description="Disordered" evidence="3">
    <location>
        <begin position="254"/>
        <end position="275"/>
    </location>
</feature>
<feature type="compositionally biased region" description="Basic and acidic residues" evidence="3">
    <location>
        <begin position="254"/>
        <end position="267"/>
    </location>
</feature>